<evidence type="ECO:0000255" key="1">
    <source>
        <dbReference type="HAMAP-Rule" id="MF_00033"/>
    </source>
</evidence>
<keyword id="KW-0131">Cell cycle</keyword>
<keyword id="KW-0132">Cell division</keyword>
<keyword id="KW-0997">Cell inner membrane</keyword>
<keyword id="KW-1003">Cell membrane</keyword>
<keyword id="KW-0133">Cell shape</keyword>
<keyword id="KW-0961">Cell wall biogenesis/degradation</keyword>
<keyword id="KW-0328">Glycosyltransferase</keyword>
<keyword id="KW-0472">Membrane</keyword>
<keyword id="KW-0573">Peptidoglycan synthesis</keyword>
<keyword id="KW-0808">Transferase</keyword>
<feature type="chain" id="PRO_1000002682" description="UDP-N-acetylglucosamine--N-acetylmuramyl-(pentapeptide) pyrophosphoryl-undecaprenol N-acetylglucosamine transferase">
    <location>
        <begin position="1"/>
        <end position="361"/>
    </location>
</feature>
<feature type="binding site" evidence="1">
    <location>
        <begin position="13"/>
        <end position="15"/>
    </location>
    <ligand>
        <name>UDP-N-acetyl-alpha-D-glucosamine</name>
        <dbReference type="ChEBI" id="CHEBI:57705"/>
    </ligand>
</feature>
<feature type="binding site" evidence="1">
    <location>
        <position position="125"/>
    </location>
    <ligand>
        <name>UDP-N-acetyl-alpha-D-glucosamine</name>
        <dbReference type="ChEBI" id="CHEBI:57705"/>
    </ligand>
</feature>
<feature type="binding site" evidence="1">
    <location>
        <position position="167"/>
    </location>
    <ligand>
        <name>UDP-N-acetyl-alpha-D-glucosamine</name>
        <dbReference type="ChEBI" id="CHEBI:57705"/>
    </ligand>
</feature>
<feature type="binding site" evidence="1">
    <location>
        <position position="196"/>
    </location>
    <ligand>
        <name>UDP-N-acetyl-alpha-D-glucosamine</name>
        <dbReference type="ChEBI" id="CHEBI:57705"/>
    </ligand>
</feature>
<feature type="binding site" evidence="1">
    <location>
        <position position="251"/>
    </location>
    <ligand>
        <name>UDP-N-acetyl-alpha-D-glucosamine</name>
        <dbReference type="ChEBI" id="CHEBI:57705"/>
    </ligand>
</feature>
<feature type="binding site" evidence="1">
    <location>
        <begin position="270"/>
        <end position="275"/>
    </location>
    <ligand>
        <name>UDP-N-acetyl-alpha-D-glucosamine</name>
        <dbReference type="ChEBI" id="CHEBI:57705"/>
    </ligand>
</feature>
<feature type="binding site" evidence="1">
    <location>
        <position position="296"/>
    </location>
    <ligand>
        <name>UDP-N-acetyl-alpha-D-glucosamine</name>
        <dbReference type="ChEBI" id="CHEBI:57705"/>
    </ligand>
</feature>
<comment type="function">
    <text evidence="1">Cell wall formation. Catalyzes the transfer of a GlcNAc subunit on undecaprenyl-pyrophosphoryl-MurNAc-pentapeptide (lipid intermediate I) to form undecaprenyl-pyrophosphoryl-MurNAc-(pentapeptide)GlcNAc (lipid intermediate II).</text>
</comment>
<comment type="catalytic activity">
    <reaction evidence="1">
        <text>di-trans,octa-cis-undecaprenyl diphospho-N-acetyl-alpha-D-muramoyl-L-alanyl-D-glutamyl-meso-2,6-diaminopimeloyl-D-alanyl-D-alanine + UDP-N-acetyl-alpha-D-glucosamine = di-trans,octa-cis-undecaprenyl diphospho-[N-acetyl-alpha-D-glucosaminyl-(1-&gt;4)]-N-acetyl-alpha-D-muramoyl-L-alanyl-D-glutamyl-meso-2,6-diaminopimeloyl-D-alanyl-D-alanine + UDP + H(+)</text>
        <dbReference type="Rhea" id="RHEA:31227"/>
        <dbReference type="ChEBI" id="CHEBI:15378"/>
        <dbReference type="ChEBI" id="CHEBI:57705"/>
        <dbReference type="ChEBI" id="CHEBI:58223"/>
        <dbReference type="ChEBI" id="CHEBI:61387"/>
        <dbReference type="ChEBI" id="CHEBI:61388"/>
        <dbReference type="EC" id="2.4.1.227"/>
    </reaction>
</comment>
<comment type="pathway">
    <text evidence="1">Cell wall biogenesis; peptidoglycan biosynthesis.</text>
</comment>
<comment type="subcellular location">
    <subcellularLocation>
        <location evidence="1">Cell inner membrane</location>
        <topology evidence="1">Peripheral membrane protein</topology>
        <orientation evidence="1">Cytoplasmic side</orientation>
    </subcellularLocation>
</comment>
<comment type="similarity">
    <text evidence="1">Belongs to the glycosyltransferase 28 family. MurG subfamily.</text>
</comment>
<dbReference type="EC" id="2.4.1.227" evidence="1"/>
<dbReference type="EMBL" id="CP000323">
    <property type="protein sequence ID" value="ABE75809.1"/>
    <property type="molecule type" value="Genomic_DNA"/>
</dbReference>
<dbReference type="RefSeq" id="WP_011514349.1">
    <property type="nucleotide sequence ID" value="NC_007969.1"/>
</dbReference>
<dbReference type="SMR" id="Q1Q944"/>
<dbReference type="STRING" id="335284.Pcryo_2032"/>
<dbReference type="CAZy" id="GT28">
    <property type="family name" value="Glycosyltransferase Family 28"/>
</dbReference>
<dbReference type="KEGG" id="pcr:Pcryo_2032"/>
<dbReference type="eggNOG" id="COG0707">
    <property type="taxonomic scope" value="Bacteria"/>
</dbReference>
<dbReference type="HOGENOM" id="CLU_037404_2_0_6"/>
<dbReference type="UniPathway" id="UPA00219"/>
<dbReference type="Proteomes" id="UP000002425">
    <property type="component" value="Chromosome"/>
</dbReference>
<dbReference type="GO" id="GO:0005886">
    <property type="term" value="C:plasma membrane"/>
    <property type="evidence" value="ECO:0007669"/>
    <property type="project" value="UniProtKB-SubCell"/>
</dbReference>
<dbReference type="GO" id="GO:0051991">
    <property type="term" value="F:UDP-N-acetyl-D-glucosamine:N-acetylmuramoyl-L-alanyl-D-glutamyl-meso-2,6-diaminopimelyl-D-alanyl-D-alanine-diphosphoundecaprenol 4-beta-N-acetylglucosaminlytransferase activity"/>
    <property type="evidence" value="ECO:0007669"/>
    <property type="project" value="RHEA"/>
</dbReference>
<dbReference type="GO" id="GO:0050511">
    <property type="term" value="F:undecaprenyldiphospho-muramoylpentapeptide beta-N-acetylglucosaminyltransferase activity"/>
    <property type="evidence" value="ECO:0007669"/>
    <property type="project" value="UniProtKB-UniRule"/>
</dbReference>
<dbReference type="GO" id="GO:0005975">
    <property type="term" value="P:carbohydrate metabolic process"/>
    <property type="evidence" value="ECO:0007669"/>
    <property type="project" value="InterPro"/>
</dbReference>
<dbReference type="GO" id="GO:0051301">
    <property type="term" value="P:cell division"/>
    <property type="evidence" value="ECO:0007669"/>
    <property type="project" value="UniProtKB-KW"/>
</dbReference>
<dbReference type="GO" id="GO:0071555">
    <property type="term" value="P:cell wall organization"/>
    <property type="evidence" value="ECO:0007669"/>
    <property type="project" value="UniProtKB-KW"/>
</dbReference>
<dbReference type="GO" id="GO:0030259">
    <property type="term" value="P:lipid glycosylation"/>
    <property type="evidence" value="ECO:0007669"/>
    <property type="project" value="UniProtKB-UniRule"/>
</dbReference>
<dbReference type="GO" id="GO:0009252">
    <property type="term" value="P:peptidoglycan biosynthetic process"/>
    <property type="evidence" value="ECO:0007669"/>
    <property type="project" value="UniProtKB-UniRule"/>
</dbReference>
<dbReference type="GO" id="GO:0008360">
    <property type="term" value="P:regulation of cell shape"/>
    <property type="evidence" value="ECO:0007669"/>
    <property type="project" value="UniProtKB-KW"/>
</dbReference>
<dbReference type="CDD" id="cd03785">
    <property type="entry name" value="GT28_MurG"/>
    <property type="match status" value="1"/>
</dbReference>
<dbReference type="Gene3D" id="3.40.50.2000">
    <property type="entry name" value="Glycogen Phosphorylase B"/>
    <property type="match status" value="2"/>
</dbReference>
<dbReference type="HAMAP" id="MF_00033">
    <property type="entry name" value="MurG"/>
    <property type="match status" value="1"/>
</dbReference>
<dbReference type="InterPro" id="IPR006009">
    <property type="entry name" value="GlcNAc_MurG"/>
</dbReference>
<dbReference type="InterPro" id="IPR007235">
    <property type="entry name" value="Glyco_trans_28_C"/>
</dbReference>
<dbReference type="InterPro" id="IPR004276">
    <property type="entry name" value="GlycoTrans_28_N"/>
</dbReference>
<dbReference type="NCBIfam" id="TIGR01133">
    <property type="entry name" value="murG"/>
    <property type="match status" value="1"/>
</dbReference>
<dbReference type="PANTHER" id="PTHR21015:SF22">
    <property type="entry name" value="GLYCOSYLTRANSFERASE"/>
    <property type="match status" value="1"/>
</dbReference>
<dbReference type="PANTHER" id="PTHR21015">
    <property type="entry name" value="UDP-N-ACETYLGLUCOSAMINE--N-ACETYLMURAMYL-(PENTAPEPTIDE) PYROPHOSPHORYL-UNDECAPRENOL N-ACETYLGLUCOSAMINE TRANSFERASE 1"/>
    <property type="match status" value="1"/>
</dbReference>
<dbReference type="Pfam" id="PF04101">
    <property type="entry name" value="Glyco_tran_28_C"/>
    <property type="match status" value="1"/>
</dbReference>
<dbReference type="Pfam" id="PF03033">
    <property type="entry name" value="Glyco_transf_28"/>
    <property type="match status" value="1"/>
</dbReference>
<dbReference type="SUPFAM" id="SSF53756">
    <property type="entry name" value="UDP-Glycosyltransferase/glycogen phosphorylase"/>
    <property type="match status" value="1"/>
</dbReference>
<protein>
    <recommendedName>
        <fullName evidence="1">UDP-N-acetylglucosamine--N-acetylmuramyl-(pentapeptide) pyrophosphoryl-undecaprenol N-acetylglucosamine transferase</fullName>
        <ecNumber evidence="1">2.4.1.227</ecNumber>
    </recommendedName>
    <alternativeName>
        <fullName evidence="1">Undecaprenyl-PP-MurNAc-pentapeptide-UDPGlcNAc GlcNAc transferase</fullName>
    </alternativeName>
</protein>
<accession>Q1Q944</accession>
<proteinExistence type="inferred from homology"/>
<gene>
    <name evidence="1" type="primary">murG</name>
    <name type="ordered locus">Pcryo_2032</name>
</gene>
<name>MURG_PSYCK</name>
<sequence length="361" mass="38631">MKTPHILMMAAGTGGHVFPALAVSEELTKRGAMIHWLGTPNGMENGLVAPTGYPFHAIEMQGLRGKGIGRLLKMPVTLLSATMAVIKIIRGNNIDIVVGFGGYVSAPGGIAARLTKTPLIIHEQNAIAGMSNRYLAKMATKVLQAFENTFGNSQLDAKLETVGNPVRNAITGVAEPIARYDINDCSALKLLVVGGSLGAQVLNETVPKALALIESPFEVRHQCGRNNEAATQAAYDEQDLSMHKFTVQPFIDDMAAAYNWADIIVCRAGALTVTEIQNVGIAAIFVPLPSAVDDHQTANARTLTLHKAAILLPQNELTPKRLSEELAALDRPACLEMAKKGHALANRQACQHVANIIWQAL</sequence>
<reference key="1">
    <citation type="submission" date="2006-03" db="EMBL/GenBank/DDBJ databases">
        <title>Complete sequence of chromosome of Psychrobacter cryohalolentis K5.</title>
        <authorList>
            <consortium name="US DOE Joint Genome Institute"/>
            <person name="Copeland A."/>
            <person name="Lucas S."/>
            <person name="Lapidus A."/>
            <person name="Barry K."/>
            <person name="Detter J.C."/>
            <person name="Glavina T."/>
            <person name="Hammon N."/>
            <person name="Israni S."/>
            <person name="Dalin E."/>
            <person name="Tice H."/>
            <person name="Pitluck S."/>
            <person name="Brettin T."/>
            <person name="Bruce D."/>
            <person name="Han C."/>
            <person name="Tapia R."/>
            <person name="Sims D.R."/>
            <person name="Gilna P."/>
            <person name="Schmutz J."/>
            <person name="Larimer F."/>
            <person name="Land M."/>
            <person name="Hauser L."/>
            <person name="Kyrpides N."/>
            <person name="Kim E."/>
            <person name="Richardson P."/>
        </authorList>
    </citation>
    <scope>NUCLEOTIDE SEQUENCE [LARGE SCALE GENOMIC DNA]</scope>
    <source>
        <strain>ATCC BAA-1226 / DSM 17306 / VKM B-2378 / K5</strain>
    </source>
</reference>
<organism>
    <name type="scientific">Psychrobacter cryohalolentis (strain ATCC BAA-1226 / DSM 17306 / VKM B-2378 / K5)</name>
    <dbReference type="NCBI Taxonomy" id="335284"/>
    <lineage>
        <taxon>Bacteria</taxon>
        <taxon>Pseudomonadati</taxon>
        <taxon>Pseudomonadota</taxon>
        <taxon>Gammaproteobacteria</taxon>
        <taxon>Moraxellales</taxon>
        <taxon>Moraxellaceae</taxon>
        <taxon>Psychrobacter</taxon>
    </lineage>
</organism>